<accession>Q3K0Y5</accession>
<keyword id="KW-0131">Cell cycle</keyword>
<keyword id="KW-0132">Cell division</keyword>
<keyword id="KW-0133">Cell shape</keyword>
<keyword id="KW-0961">Cell wall biogenesis/degradation</keyword>
<keyword id="KW-0963">Cytoplasm</keyword>
<keyword id="KW-0274">FAD</keyword>
<keyword id="KW-0285">Flavoprotein</keyword>
<keyword id="KW-0521">NADP</keyword>
<keyword id="KW-0560">Oxidoreductase</keyword>
<keyword id="KW-0573">Peptidoglycan synthesis</keyword>
<reference key="1">
    <citation type="journal article" date="2005" name="Proc. Natl. Acad. Sci. U.S.A.">
        <title>Genome analysis of multiple pathogenic isolates of Streptococcus agalactiae: implications for the microbial 'pan-genome'.</title>
        <authorList>
            <person name="Tettelin H."/>
            <person name="Masignani V."/>
            <person name="Cieslewicz M.J."/>
            <person name="Donati C."/>
            <person name="Medini D."/>
            <person name="Ward N.L."/>
            <person name="Angiuoli S.V."/>
            <person name="Crabtree J."/>
            <person name="Jones A.L."/>
            <person name="Durkin A.S."/>
            <person name="DeBoy R.T."/>
            <person name="Davidsen T.M."/>
            <person name="Mora M."/>
            <person name="Scarselli M."/>
            <person name="Margarit y Ros I."/>
            <person name="Peterson J.D."/>
            <person name="Hauser C.R."/>
            <person name="Sundaram J.P."/>
            <person name="Nelson W.C."/>
            <person name="Madupu R."/>
            <person name="Brinkac L.M."/>
            <person name="Dodson R.J."/>
            <person name="Rosovitz M.J."/>
            <person name="Sullivan S.A."/>
            <person name="Daugherty S.C."/>
            <person name="Haft D.H."/>
            <person name="Selengut J."/>
            <person name="Gwinn M.L."/>
            <person name="Zhou L."/>
            <person name="Zafar N."/>
            <person name="Khouri H."/>
            <person name="Radune D."/>
            <person name="Dimitrov G."/>
            <person name="Watkins K."/>
            <person name="O'Connor K.J."/>
            <person name="Smith S."/>
            <person name="Utterback T.R."/>
            <person name="White O."/>
            <person name="Rubens C.E."/>
            <person name="Grandi G."/>
            <person name="Madoff L.C."/>
            <person name="Kasper D.L."/>
            <person name="Telford J.L."/>
            <person name="Wessels M.R."/>
            <person name="Rappuoli R."/>
            <person name="Fraser C.M."/>
        </authorList>
    </citation>
    <scope>NUCLEOTIDE SEQUENCE [LARGE SCALE GENOMIC DNA]</scope>
    <source>
        <strain>ATCC 27591 / A909 / CDC SS700</strain>
    </source>
</reference>
<comment type="function">
    <text evidence="1">Cell wall formation.</text>
</comment>
<comment type="catalytic activity">
    <reaction evidence="1">
        <text>UDP-N-acetyl-alpha-D-muramate + NADP(+) = UDP-N-acetyl-3-O-(1-carboxyvinyl)-alpha-D-glucosamine + NADPH + H(+)</text>
        <dbReference type="Rhea" id="RHEA:12248"/>
        <dbReference type="ChEBI" id="CHEBI:15378"/>
        <dbReference type="ChEBI" id="CHEBI:57783"/>
        <dbReference type="ChEBI" id="CHEBI:58349"/>
        <dbReference type="ChEBI" id="CHEBI:68483"/>
        <dbReference type="ChEBI" id="CHEBI:70757"/>
        <dbReference type="EC" id="1.3.1.98"/>
    </reaction>
</comment>
<comment type="cofactor">
    <cofactor evidence="1">
        <name>FAD</name>
        <dbReference type="ChEBI" id="CHEBI:57692"/>
    </cofactor>
</comment>
<comment type="pathway">
    <text evidence="1">Cell wall biogenesis; peptidoglycan biosynthesis.</text>
</comment>
<comment type="subcellular location">
    <subcellularLocation>
        <location evidence="1">Cytoplasm</location>
    </subcellularLocation>
</comment>
<comment type="similarity">
    <text evidence="1">Belongs to the MurB family.</text>
</comment>
<name>MURB_STRA1</name>
<sequence>MIKTIQKELEGLDIRFDEPLKKYTYTKVGGPADYLAFPRNRLELSRIVKFANSQNIPWMVLGNASNIIVRDGGIRGFVIMFDKLSTVTVNGYVIEAEAGANLIETTRIARYHSLTGFEFACGIPGSVGGAVFMNAGAYGGEIAHILLSAQVLTPQGELKTIEARNMQFGYRHSVIQESGDIVISAKFALKPGDHLMITQEMDRLTYLRELKQPLEYPSCGSVFKRPPGHFAGQLISEAHLKGQRIGGVEVSQKHAGFMVNIAEGSAQDYENLIEHVINTVESTSGVHLEPEVRIIGESLL</sequence>
<evidence type="ECO:0000255" key="1">
    <source>
        <dbReference type="HAMAP-Rule" id="MF_00037"/>
    </source>
</evidence>
<proteinExistence type="inferred from homology"/>
<organism>
    <name type="scientific">Streptococcus agalactiae serotype Ia (strain ATCC 27591 / A909 / CDC SS700)</name>
    <dbReference type="NCBI Taxonomy" id="205921"/>
    <lineage>
        <taxon>Bacteria</taxon>
        <taxon>Bacillati</taxon>
        <taxon>Bacillota</taxon>
        <taxon>Bacilli</taxon>
        <taxon>Lactobacillales</taxon>
        <taxon>Streptococcaceae</taxon>
        <taxon>Streptococcus</taxon>
    </lineage>
</organism>
<dbReference type="EC" id="1.3.1.98" evidence="1"/>
<dbReference type="EMBL" id="CP000114">
    <property type="protein sequence ID" value="ABA46253.1"/>
    <property type="molecule type" value="Genomic_DNA"/>
</dbReference>
<dbReference type="RefSeq" id="WP_000598027.1">
    <property type="nucleotide sequence ID" value="NC_007432.1"/>
</dbReference>
<dbReference type="SMR" id="Q3K0Y5"/>
<dbReference type="GeneID" id="66886037"/>
<dbReference type="KEGG" id="sak:SAK_1197"/>
<dbReference type="HOGENOM" id="CLU_035304_1_1_9"/>
<dbReference type="UniPathway" id="UPA00219"/>
<dbReference type="GO" id="GO:0005829">
    <property type="term" value="C:cytosol"/>
    <property type="evidence" value="ECO:0007669"/>
    <property type="project" value="TreeGrafter"/>
</dbReference>
<dbReference type="GO" id="GO:0071949">
    <property type="term" value="F:FAD binding"/>
    <property type="evidence" value="ECO:0007669"/>
    <property type="project" value="InterPro"/>
</dbReference>
<dbReference type="GO" id="GO:0008762">
    <property type="term" value="F:UDP-N-acetylmuramate dehydrogenase activity"/>
    <property type="evidence" value="ECO:0007669"/>
    <property type="project" value="UniProtKB-UniRule"/>
</dbReference>
<dbReference type="GO" id="GO:0051301">
    <property type="term" value="P:cell division"/>
    <property type="evidence" value="ECO:0007669"/>
    <property type="project" value="UniProtKB-KW"/>
</dbReference>
<dbReference type="GO" id="GO:0071555">
    <property type="term" value="P:cell wall organization"/>
    <property type="evidence" value="ECO:0007669"/>
    <property type="project" value="UniProtKB-KW"/>
</dbReference>
<dbReference type="GO" id="GO:0009252">
    <property type="term" value="P:peptidoglycan biosynthetic process"/>
    <property type="evidence" value="ECO:0007669"/>
    <property type="project" value="UniProtKB-UniRule"/>
</dbReference>
<dbReference type="GO" id="GO:0008360">
    <property type="term" value="P:regulation of cell shape"/>
    <property type="evidence" value="ECO:0007669"/>
    <property type="project" value="UniProtKB-KW"/>
</dbReference>
<dbReference type="Gene3D" id="3.30.465.10">
    <property type="match status" value="1"/>
</dbReference>
<dbReference type="Gene3D" id="3.90.78.10">
    <property type="entry name" value="UDP-N-acetylenolpyruvoylglucosamine reductase, C-terminal domain"/>
    <property type="match status" value="1"/>
</dbReference>
<dbReference type="Gene3D" id="3.30.43.10">
    <property type="entry name" value="Uridine Diphospho-n-acetylenolpyruvylglucosamine Reductase, domain 2"/>
    <property type="match status" value="1"/>
</dbReference>
<dbReference type="HAMAP" id="MF_00037">
    <property type="entry name" value="MurB"/>
    <property type="match status" value="1"/>
</dbReference>
<dbReference type="InterPro" id="IPR016166">
    <property type="entry name" value="FAD-bd_PCMH"/>
</dbReference>
<dbReference type="InterPro" id="IPR036318">
    <property type="entry name" value="FAD-bd_PCMH-like_sf"/>
</dbReference>
<dbReference type="InterPro" id="IPR016167">
    <property type="entry name" value="FAD-bd_PCMH_sub1"/>
</dbReference>
<dbReference type="InterPro" id="IPR016169">
    <property type="entry name" value="FAD-bd_PCMH_sub2"/>
</dbReference>
<dbReference type="InterPro" id="IPR003170">
    <property type="entry name" value="MurB"/>
</dbReference>
<dbReference type="InterPro" id="IPR011601">
    <property type="entry name" value="MurB_C"/>
</dbReference>
<dbReference type="InterPro" id="IPR036635">
    <property type="entry name" value="MurB_C_sf"/>
</dbReference>
<dbReference type="InterPro" id="IPR006094">
    <property type="entry name" value="Oxid_FAD_bind_N"/>
</dbReference>
<dbReference type="NCBIfam" id="TIGR00179">
    <property type="entry name" value="murB"/>
    <property type="match status" value="1"/>
</dbReference>
<dbReference type="NCBIfam" id="NF010480">
    <property type="entry name" value="PRK13905.1"/>
    <property type="match status" value="1"/>
</dbReference>
<dbReference type="PANTHER" id="PTHR21071">
    <property type="entry name" value="UDP-N-ACETYLENOLPYRUVOYLGLUCOSAMINE REDUCTASE"/>
    <property type="match status" value="1"/>
</dbReference>
<dbReference type="PANTHER" id="PTHR21071:SF4">
    <property type="entry name" value="UDP-N-ACETYLENOLPYRUVOYLGLUCOSAMINE REDUCTASE"/>
    <property type="match status" value="1"/>
</dbReference>
<dbReference type="Pfam" id="PF01565">
    <property type="entry name" value="FAD_binding_4"/>
    <property type="match status" value="1"/>
</dbReference>
<dbReference type="Pfam" id="PF02873">
    <property type="entry name" value="MurB_C"/>
    <property type="match status" value="1"/>
</dbReference>
<dbReference type="SUPFAM" id="SSF56176">
    <property type="entry name" value="FAD-binding/transporter-associated domain-like"/>
    <property type="match status" value="1"/>
</dbReference>
<dbReference type="SUPFAM" id="SSF56194">
    <property type="entry name" value="Uridine diphospho-N-Acetylenolpyruvylglucosamine reductase, MurB, C-terminal domain"/>
    <property type="match status" value="1"/>
</dbReference>
<dbReference type="PROSITE" id="PS51387">
    <property type="entry name" value="FAD_PCMH"/>
    <property type="match status" value="1"/>
</dbReference>
<protein>
    <recommendedName>
        <fullName evidence="1">UDP-N-acetylenolpyruvoylglucosamine reductase</fullName>
        <ecNumber evidence="1">1.3.1.98</ecNumber>
    </recommendedName>
    <alternativeName>
        <fullName evidence="1">UDP-N-acetylmuramate dehydrogenase</fullName>
    </alternativeName>
</protein>
<feature type="chain" id="PRO_0000224724" description="UDP-N-acetylenolpyruvoylglucosamine reductase">
    <location>
        <begin position="1"/>
        <end position="300"/>
    </location>
</feature>
<feature type="domain" description="FAD-binding PCMH-type" evidence="1">
    <location>
        <begin position="27"/>
        <end position="192"/>
    </location>
</feature>
<feature type="active site" evidence="1">
    <location>
        <position position="171"/>
    </location>
</feature>
<feature type="active site" description="Proton donor" evidence="1">
    <location>
        <position position="221"/>
    </location>
</feature>
<feature type="active site" evidence="1">
    <location>
        <position position="291"/>
    </location>
</feature>
<gene>
    <name evidence="1" type="primary">murB</name>
    <name type="ordered locus">SAK_1197</name>
</gene>